<sequence>MNINTVPELIGRGSASITPGYMSGFKNSFETEALPGALPIGRNSPQRCAYGLYAEQLSGSPFTAPRGSNERSWLYRIRPSVKHSGRFAKADVGLWRTAPCHEHEMPIAQLRWDPPPLPQHEQTFLQGVVTMTTAGDANTQAGMAAHIYLITASMVDQAFYNADGELMFVPQQGSLRFVTEFGRIDAGPGEIVVIPRGVKFRVELTGGPARGYLCENYGGAFTLPERGPIGANCLANARDFLTPVAAYEDKDTPTELFVKWGGTLWATTLPYSPIDVVAWHGNYAPYKYDLRTFSPVGAIGFDHPDPSIFTVLTAPSETPGTANIDFVIFPERWMVADNTFRPPWYHMNIMSEFMGLIYGVYDAKPQGFVPGGASLHNMMLPHGPDREAFDHASNGELKPTKLTGTMAFMFETRYPQRVTEYAATSGLLQPDYADCWTGLEKRFDPTRP</sequence>
<evidence type="ECO:0000255" key="1">
    <source>
        <dbReference type="HAMAP-Rule" id="MF_00334"/>
    </source>
</evidence>
<name>HGD_RHOP5</name>
<dbReference type="EC" id="1.13.11.5" evidence="1"/>
<dbReference type="EMBL" id="CP000463">
    <property type="protein sequence ID" value="ABJ04868.1"/>
    <property type="molecule type" value="Genomic_DNA"/>
</dbReference>
<dbReference type="SMR" id="Q07T66"/>
<dbReference type="STRING" id="316055.RPE_0912"/>
<dbReference type="KEGG" id="rpe:RPE_0912"/>
<dbReference type="eggNOG" id="COG3508">
    <property type="taxonomic scope" value="Bacteria"/>
</dbReference>
<dbReference type="HOGENOM" id="CLU_027174_0_0_5"/>
<dbReference type="OrthoDB" id="9811253at2"/>
<dbReference type="UniPathway" id="UPA00139">
    <property type="reaction ID" value="UER00339"/>
</dbReference>
<dbReference type="GO" id="GO:0005737">
    <property type="term" value="C:cytoplasm"/>
    <property type="evidence" value="ECO:0007669"/>
    <property type="project" value="TreeGrafter"/>
</dbReference>
<dbReference type="GO" id="GO:0004411">
    <property type="term" value="F:homogentisate 1,2-dioxygenase activity"/>
    <property type="evidence" value="ECO:0007669"/>
    <property type="project" value="UniProtKB-UniRule"/>
</dbReference>
<dbReference type="GO" id="GO:0005506">
    <property type="term" value="F:iron ion binding"/>
    <property type="evidence" value="ECO:0007669"/>
    <property type="project" value="UniProtKB-UniRule"/>
</dbReference>
<dbReference type="GO" id="GO:0006559">
    <property type="term" value="P:L-phenylalanine catabolic process"/>
    <property type="evidence" value="ECO:0007669"/>
    <property type="project" value="UniProtKB-UniRule"/>
</dbReference>
<dbReference type="GO" id="GO:0006572">
    <property type="term" value="P:tyrosine catabolic process"/>
    <property type="evidence" value="ECO:0007669"/>
    <property type="project" value="UniProtKB-UniRule"/>
</dbReference>
<dbReference type="CDD" id="cd07000">
    <property type="entry name" value="cupin_HGO_N"/>
    <property type="match status" value="1"/>
</dbReference>
<dbReference type="FunFam" id="2.60.120.10:FF:000053">
    <property type="entry name" value="Homogentisate 1,2-dioxygenase"/>
    <property type="match status" value="1"/>
</dbReference>
<dbReference type="Gene3D" id="2.60.120.10">
    <property type="entry name" value="Jelly Rolls"/>
    <property type="match status" value="1"/>
</dbReference>
<dbReference type="HAMAP" id="MF_00334">
    <property type="entry name" value="Homogentis_dioxygen"/>
    <property type="match status" value="1"/>
</dbReference>
<dbReference type="InterPro" id="IPR046451">
    <property type="entry name" value="HgmA_C"/>
</dbReference>
<dbReference type="InterPro" id="IPR046452">
    <property type="entry name" value="HgmA_N"/>
</dbReference>
<dbReference type="InterPro" id="IPR005708">
    <property type="entry name" value="Homogentis_dOase"/>
</dbReference>
<dbReference type="InterPro" id="IPR022950">
    <property type="entry name" value="Homogentis_dOase_bac"/>
</dbReference>
<dbReference type="InterPro" id="IPR014710">
    <property type="entry name" value="RmlC-like_jellyroll"/>
</dbReference>
<dbReference type="InterPro" id="IPR011051">
    <property type="entry name" value="RmlC_Cupin_sf"/>
</dbReference>
<dbReference type="NCBIfam" id="TIGR01015">
    <property type="entry name" value="hmgA"/>
    <property type="match status" value="1"/>
</dbReference>
<dbReference type="PANTHER" id="PTHR11056">
    <property type="entry name" value="HOMOGENTISATE 1,2-DIOXYGENASE"/>
    <property type="match status" value="1"/>
</dbReference>
<dbReference type="PANTHER" id="PTHR11056:SF0">
    <property type="entry name" value="HOMOGENTISATE 1,2-DIOXYGENASE"/>
    <property type="match status" value="1"/>
</dbReference>
<dbReference type="Pfam" id="PF04209">
    <property type="entry name" value="HgmA_C"/>
    <property type="match status" value="1"/>
</dbReference>
<dbReference type="Pfam" id="PF20510">
    <property type="entry name" value="HgmA_N"/>
    <property type="match status" value="1"/>
</dbReference>
<dbReference type="SUPFAM" id="SSF51182">
    <property type="entry name" value="RmlC-like cupins"/>
    <property type="match status" value="1"/>
</dbReference>
<feature type="chain" id="PRO_1000019541" description="Homogentisate 1,2-dioxygenase">
    <location>
        <begin position="1"/>
        <end position="448"/>
    </location>
</feature>
<feature type="active site" description="Proton acceptor" evidence="1">
    <location>
        <position position="303"/>
    </location>
</feature>
<feature type="binding site" evidence="1">
    <location>
        <position position="346"/>
    </location>
    <ligand>
        <name>Fe cation</name>
        <dbReference type="ChEBI" id="CHEBI:24875"/>
    </ligand>
</feature>
<feature type="binding site" evidence="1">
    <location>
        <position position="352"/>
    </location>
    <ligand>
        <name>Fe cation</name>
        <dbReference type="ChEBI" id="CHEBI:24875"/>
    </ligand>
</feature>
<feature type="binding site" evidence="1">
    <location>
        <position position="361"/>
    </location>
    <ligand>
        <name>homogentisate</name>
        <dbReference type="ChEBI" id="CHEBI:16169"/>
    </ligand>
</feature>
<feature type="binding site" evidence="1">
    <location>
        <position position="382"/>
    </location>
    <ligand>
        <name>Fe cation</name>
        <dbReference type="ChEBI" id="CHEBI:24875"/>
    </ligand>
</feature>
<feature type="binding site" evidence="1">
    <location>
        <position position="382"/>
    </location>
    <ligand>
        <name>homogentisate</name>
        <dbReference type="ChEBI" id="CHEBI:16169"/>
    </ligand>
</feature>
<organism>
    <name type="scientific">Rhodopseudomonas palustris (strain BisA53)</name>
    <dbReference type="NCBI Taxonomy" id="316055"/>
    <lineage>
        <taxon>Bacteria</taxon>
        <taxon>Pseudomonadati</taxon>
        <taxon>Pseudomonadota</taxon>
        <taxon>Alphaproteobacteria</taxon>
        <taxon>Hyphomicrobiales</taxon>
        <taxon>Nitrobacteraceae</taxon>
        <taxon>Rhodopseudomonas</taxon>
    </lineage>
</organism>
<proteinExistence type="inferred from homology"/>
<accession>Q07T66</accession>
<keyword id="KW-0223">Dioxygenase</keyword>
<keyword id="KW-0408">Iron</keyword>
<keyword id="KW-0479">Metal-binding</keyword>
<keyword id="KW-0560">Oxidoreductase</keyword>
<keyword id="KW-0585">Phenylalanine catabolism</keyword>
<keyword id="KW-0828">Tyrosine catabolism</keyword>
<protein>
    <recommendedName>
        <fullName evidence="1">Homogentisate 1,2-dioxygenase</fullName>
        <shortName evidence="1">HGDO</shortName>
        <ecNumber evidence="1">1.13.11.5</ecNumber>
    </recommendedName>
    <alternativeName>
        <fullName evidence="1">Homogentisate oxygenase</fullName>
    </alternativeName>
    <alternativeName>
        <fullName evidence="1">Homogentisic acid oxidase</fullName>
    </alternativeName>
    <alternativeName>
        <fullName evidence="1">Homogentisicase</fullName>
    </alternativeName>
</protein>
<gene>
    <name evidence="1" type="primary">hmgA</name>
    <name type="ordered locus">RPE_0912</name>
</gene>
<comment type="function">
    <text evidence="1">Involved in the catabolism of homogentisate (2,5-dihydroxyphenylacetate or 2,5-OH-PhAc), a central intermediate in the degradation of phenylalanine and tyrosine. Catalyzes the oxidative ring cleavage of the aromatic ring of homogentisate to yield maleylacetoacetate.</text>
</comment>
<comment type="catalytic activity">
    <reaction evidence="1">
        <text>homogentisate + O2 = 4-maleylacetoacetate + H(+)</text>
        <dbReference type="Rhea" id="RHEA:15449"/>
        <dbReference type="ChEBI" id="CHEBI:15378"/>
        <dbReference type="ChEBI" id="CHEBI:15379"/>
        <dbReference type="ChEBI" id="CHEBI:16169"/>
        <dbReference type="ChEBI" id="CHEBI:17105"/>
        <dbReference type="EC" id="1.13.11.5"/>
    </reaction>
</comment>
<comment type="cofactor">
    <cofactor evidence="1">
        <name>Fe cation</name>
        <dbReference type="ChEBI" id="CHEBI:24875"/>
    </cofactor>
</comment>
<comment type="pathway">
    <text evidence="1">Amino-acid degradation; L-phenylalanine degradation; acetoacetate and fumarate from L-phenylalanine: step 4/6.</text>
</comment>
<comment type="subunit">
    <text evidence="1">Hexamer; dimer of trimers.</text>
</comment>
<comment type="similarity">
    <text evidence="1">Belongs to the homogentisate dioxygenase family.</text>
</comment>
<reference key="1">
    <citation type="submission" date="2006-09" db="EMBL/GenBank/DDBJ databases">
        <title>Complete sequence of Rhodopseudomonas palustris BisA53.</title>
        <authorList>
            <consortium name="US DOE Joint Genome Institute"/>
            <person name="Copeland A."/>
            <person name="Lucas S."/>
            <person name="Lapidus A."/>
            <person name="Barry K."/>
            <person name="Detter J.C."/>
            <person name="Glavina del Rio T."/>
            <person name="Hammon N."/>
            <person name="Israni S."/>
            <person name="Dalin E."/>
            <person name="Tice H."/>
            <person name="Pitluck S."/>
            <person name="Chain P."/>
            <person name="Malfatti S."/>
            <person name="Shin M."/>
            <person name="Vergez L."/>
            <person name="Schmutz J."/>
            <person name="Larimer F."/>
            <person name="Land M."/>
            <person name="Hauser L."/>
            <person name="Pelletier D.A."/>
            <person name="Kyrpides N."/>
            <person name="Kim E."/>
            <person name="Harwood C.S."/>
            <person name="Oda Y."/>
            <person name="Richardson P."/>
        </authorList>
    </citation>
    <scope>NUCLEOTIDE SEQUENCE [LARGE SCALE GENOMIC DNA]</scope>
    <source>
        <strain>BisA53</strain>
    </source>
</reference>